<sequence>MAIINMSDLDLQGKRVLIREDLNVPVSNGVVTSDARLRASLPTIELALAKGAAVMVMSHLGRPTEGEYNSEFSMQPVVDYLAKALSSPVRLATDYLDGVEVAVGEVVVFENVRFNKGEKKNDEALSKKMAALCDVYVMDAFGTAHRAEASTNGVGLYAPIACAGPLLAQELNALGKALDNPARPMVAIVGGSKVSTKLTVLESLSGIVDQLVVGGGIANTFIAAAGHNVGKSLYEADLIDEAKRLVANAQSRGGDIPVPTDVVVAGEFSPTATATLKSVSDVSDSDMIFDIGPDSAEALAKIIESAGTIVWNGPVGVFEFDQFGEGTKRIAQAIADSKAFSIAGGGDTLAAVDKYGIADKVSYISTGGGAFLEFLEGKELPAVAMLKKRGA</sequence>
<proteinExistence type="inferred from homology"/>
<evidence type="ECO:0000255" key="1">
    <source>
        <dbReference type="HAMAP-Rule" id="MF_00145"/>
    </source>
</evidence>
<accession>A4Y3S0</accession>
<keyword id="KW-0067">ATP-binding</keyword>
<keyword id="KW-0963">Cytoplasm</keyword>
<keyword id="KW-0324">Glycolysis</keyword>
<keyword id="KW-0418">Kinase</keyword>
<keyword id="KW-0547">Nucleotide-binding</keyword>
<keyword id="KW-0808">Transferase</keyword>
<feature type="chain" id="PRO_1000058059" description="Phosphoglycerate kinase">
    <location>
        <begin position="1"/>
        <end position="391"/>
    </location>
</feature>
<feature type="binding site" evidence="1">
    <location>
        <begin position="21"/>
        <end position="23"/>
    </location>
    <ligand>
        <name>substrate</name>
    </ligand>
</feature>
<feature type="binding site" evidence="1">
    <location>
        <position position="36"/>
    </location>
    <ligand>
        <name>substrate</name>
    </ligand>
</feature>
<feature type="binding site" evidence="1">
    <location>
        <begin position="59"/>
        <end position="62"/>
    </location>
    <ligand>
        <name>substrate</name>
    </ligand>
</feature>
<feature type="binding site" evidence="1">
    <location>
        <position position="113"/>
    </location>
    <ligand>
        <name>substrate</name>
    </ligand>
</feature>
<feature type="binding site" evidence="1">
    <location>
        <position position="146"/>
    </location>
    <ligand>
        <name>substrate</name>
    </ligand>
</feature>
<feature type="binding site" evidence="1">
    <location>
        <position position="197"/>
    </location>
    <ligand>
        <name>ATP</name>
        <dbReference type="ChEBI" id="CHEBI:30616"/>
    </ligand>
</feature>
<feature type="binding site" evidence="1">
    <location>
        <position position="319"/>
    </location>
    <ligand>
        <name>ATP</name>
        <dbReference type="ChEBI" id="CHEBI:30616"/>
    </ligand>
</feature>
<feature type="binding site" evidence="1">
    <location>
        <begin position="345"/>
        <end position="348"/>
    </location>
    <ligand>
        <name>ATP</name>
        <dbReference type="ChEBI" id="CHEBI:30616"/>
    </ligand>
</feature>
<gene>
    <name evidence="1" type="primary">pgk</name>
    <name type="ordered locus">Sputcn32_0874</name>
</gene>
<name>PGK_SHEPC</name>
<dbReference type="EC" id="2.7.2.3" evidence="1"/>
<dbReference type="EMBL" id="CP000681">
    <property type="protein sequence ID" value="ABP74603.1"/>
    <property type="molecule type" value="Genomic_DNA"/>
</dbReference>
<dbReference type="SMR" id="A4Y3S0"/>
<dbReference type="STRING" id="319224.Sputcn32_0874"/>
<dbReference type="KEGG" id="spc:Sputcn32_0874"/>
<dbReference type="eggNOG" id="COG0126">
    <property type="taxonomic scope" value="Bacteria"/>
</dbReference>
<dbReference type="HOGENOM" id="CLU_025427_0_2_6"/>
<dbReference type="UniPathway" id="UPA00109">
    <property type="reaction ID" value="UER00185"/>
</dbReference>
<dbReference type="GO" id="GO:0005829">
    <property type="term" value="C:cytosol"/>
    <property type="evidence" value="ECO:0007669"/>
    <property type="project" value="TreeGrafter"/>
</dbReference>
<dbReference type="GO" id="GO:0043531">
    <property type="term" value="F:ADP binding"/>
    <property type="evidence" value="ECO:0007669"/>
    <property type="project" value="TreeGrafter"/>
</dbReference>
<dbReference type="GO" id="GO:0005524">
    <property type="term" value="F:ATP binding"/>
    <property type="evidence" value="ECO:0007669"/>
    <property type="project" value="UniProtKB-KW"/>
</dbReference>
<dbReference type="GO" id="GO:0004618">
    <property type="term" value="F:phosphoglycerate kinase activity"/>
    <property type="evidence" value="ECO:0007669"/>
    <property type="project" value="UniProtKB-UniRule"/>
</dbReference>
<dbReference type="GO" id="GO:0006094">
    <property type="term" value="P:gluconeogenesis"/>
    <property type="evidence" value="ECO:0007669"/>
    <property type="project" value="TreeGrafter"/>
</dbReference>
<dbReference type="GO" id="GO:0006096">
    <property type="term" value="P:glycolytic process"/>
    <property type="evidence" value="ECO:0007669"/>
    <property type="project" value="UniProtKB-UniRule"/>
</dbReference>
<dbReference type="FunFam" id="3.40.50.1260:FF:000001">
    <property type="entry name" value="Phosphoglycerate kinase"/>
    <property type="match status" value="1"/>
</dbReference>
<dbReference type="FunFam" id="3.40.50.1260:FF:000002">
    <property type="entry name" value="Phosphoglycerate kinase"/>
    <property type="match status" value="1"/>
</dbReference>
<dbReference type="Gene3D" id="3.40.50.1260">
    <property type="entry name" value="Phosphoglycerate kinase, N-terminal domain"/>
    <property type="match status" value="2"/>
</dbReference>
<dbReference type="HAMAP" id="MF_00145">
    <property type="entry name" value="Phosphoglyc_kinase"/>
    <property type="match status" value="1"/>
</dbReference>
<dbReference type="InterPro" id="IPR001576">
    <property type="entry name" value="Phosphoglycerate_kinase"/>
</dbReference>
<dbReference type="InterPro" id="IPR015911">
    <property type="entry name" value="Phosphoglycerate_kinase_CS"/>
</dbReference>
<dbReference type="InterPro" id="IPR015824">
    <property type="entry name" value="Phosphoglycerate_kinase_N"/>
</dbReference>
<dbReference type="InterPro" id="IPR036043">
    <property type="entry name" value="Phosphoglycerate_kinase_sf"/>
</dbReference>
<dbReference type="PANTHER" id="PTHR11406">
    <property type="entry name" value="PHOSPHOGLYCERATE KINASE"/>
    <property type="match status" value="1"/>
</dbReference>
<dbReference type="PANTHER" id="PTHR11406:SF23">
    <property type="entry name" value="PHOSPHOGLYCERATE KINASE 1, CHLOROPLASTIC-RELATED"/>
    <property type="match status" value="1"/>
</dbReference>
<dbReference type="Pfam" id="PF00162">
    <property type="entry name" value="PGK"/>
    <property type="match status" value="1"/>
</dbReference>
<dbReference type="PIRSF" id="PIRSF000724">
    <property type="entry name" value="Pgk"/>
    <property type="match status" value="1"/>
</dbReference>
<dbReference type="PRINTS" id="PR00477">
    <property type="entry name" value="PHGLYCKINASE"/>
</dbReference>
<dbReference type="SUPFAM" id="SSF53748">
    <property type="entry name" value="Phosphoglycerate kinase"/>
    <property type="match status" value="1"/>
</dbReference>
<dbReference type="PROSITE" id="PS00111">
    <property type="entry name" value="PGLYCERATE_KINASE"/>
    <property type="match status" value="1"/>
</dbReference>
<protein>
    <recommendedName>
        <fullName evidence="1">Phosphoglycerate kinase</fullName>
        <ecNumber evidence="1">2.7.2.3</ecNumber>
    </recommendedName>
</protein>
<organism>
    <name type="scientific">Shewanella putrefaciens (strain CN-32 / ATCC BAA-453)</name>
    <dbReference type="NCBI Taxonomy" id="319224"/>
    <lineage>
        <taxon>Bacteria</taxon>
        <taxon>Pseudomonadati</taxon>
        <taxon>Pseudomonadota</taxon>
        <taxon>Gammaproteobacteria</taxon>
        <taxon>Alteromonadales</taxon>
        <taxon>Shewanellaceae</taxon>
        <taxon>Shewanella</taxon>
    </lineage>
</organism>
<reference key="1">
    <citation type="submission" date="2007-04" db="EMBL/GenBank/DDBJ databases">
        <title>Complete sequence of Shewanella putrefaciens CN-32.</title>
        <authorList>
            <consortium name="US DOE Joint Genome Institute"/>
            <person name="Copeland A."/>
            <person name="Lucas S."/>
            <person name="Lapidus A."/>
            <person name="Barry K."/>
            <person name="Detter J.C."/>
            <person name="Glavina del Rio T."/>
            <person name="Hammon N."/>
            <person name="Israni S."/>
            <person name="Dalin E."/>
            <person name="Tice H."/>
            <person name="Pitluck S."/>
            <person name="Chain P."/>
            <person name="Malfatti S."/>
            <person name="Shin M."/>
            <person name="Vergez L."/>
            <person name="Schmutz J."/>
            <person name="Larimer F."/>
            <person name="Land M."/>
            <person name="Hauser L."/>
            <person name="Kyrpides N."/>
            <person name="Mikhailova N."/>
            <person name="Romine M.F."/>
            <person name="Fredrickson J."/>
            <person name="Tiedje J."/>
            <person name="Richardson P."/>
        </authorList>
    </citation>
    <scope>NUCLEOTIDE SEQUENCE [LARGE SCALE GENOMIC DNA]</scope>
    <source>
        <strain>CN-32 / ATCC BAA-453</strain>
    </source>
</reference>
<comment type="catalytic activity">
    <reaction evidence="1">
        <text>(2R)-3-phosphoglycerate + ATP = (2R)-3-phospho-glyceroyl phosphate + ADP</text>
        <dbReference type="Rhea" id="RHEA:14801"/>
        <dbReference type="ChEBI" id="CHEBI:30616"/>
        <dbReference type="ChEBI" id="CHEBI:57604"/>
        <dbReference type="ChEBI" id="CHEBI:58272"/>
        <dbReference type="ChEBI" id="CHEBI:456216"/>
        <dbReference type="EC" id="2.7.2.3"/>
    </reaction>
</comment>
<comment type="pathway">
    <text evidence="1">Carbohydrate degradation; glycolysis; pyruvate from D-glyceraldehyde 3-phosphate: step 2/5.</text>
</comment>
<comment type="subunit">
    <text evidence="1">Monomer.</text>
</comment>
<comment type="subcellular location">
    <subcellularLocation>
        <location evidence="1">Cytoplasm</location>
    </subcellularLocation>
</comment>
<comment type="similarity">
    <text evidence="1">Belongs to the phosphoglycerate kinase family.</text>
</comment>